<protein>
    <recommendedName>
        <fullName>Putative uncharacterized protein YEL010W</fullName>
    </recommendedName>
</protein>
<organism>
    <name type="scientific">Saccharomyces cerevisiae (strain ATCC 204508 / S288c)</name>
    <name type="common">Baker's yeast</name>
    <dbReference type="NCBI Taxonomy" id="559292"/>
    <lineage>
        <taxon>Eukaryota</taxon>
        <taxon>Fungi</taxon>
        <taxon>Dikarya</taxon>
        <taxon>Ascomycota</taxon>
        <taxon>Saccharomycotina</taxon>
        <taxon>Saccharomycetes</taxon>
        <taxon>Saccharomycetales</taxon>
        <taxon>Saccharomycetaceae</taxon>
        <taxon>Saccharomyces</taxon>
    </lineage>
</organism>
<reference key="1">
    <citation type="journal article" date="1997" name="Nature">
        <title>The nucleotide sequence of Saccharomyces cerevisiae chromosome V.</title>
        <authorList>
            <person name="Dietrich F.S."/>
            <person name="Mulligan J.T."/>
            <person name="Hennessy K.M."/>
            <person name="Yelton M.A."/>
            <person name="Allen E."/>
            <person name="Araujo R."/>
            <person name="Aviles E."/>
            <person name="Berno A."/>
            <person name="Brennan T."/>
            <person name="Carpenter J."/>
            <person name="Chen E."/>
            <person name="Cherry J.M."/>
            <person name="Chung E."/>
            <person name="Duncan M."/>
            <person name="Guzman E."/>
            <person name="Hartzell G."/>
            <person name="Hunicke-Smith S."/>
            <person name="Hyman R.W."/>
            <person name="Kayser A."/>
            <person name="Komp C."/>
            <person name="Lashkari D."/>
            <person name="Lew H."/>
            <person name="Lin D."/>
            <person name="Mosedale D."/>
            <person name="Nakahara K."/>
            <person name="Namath A."/>
            <person name="Norgren R."/>
            <person name="Oefner P."/>
            <person name="Oh C."/>
            <person name="Petel F.X."/>
            <person name="Roberts D."/>
            <person name="Sehl P."/>
            <person name="Schramm S."/>
            <person name="Shogren T."/>
            <person name="Smith V."/>
            <person name="Taylor P."/>
            <person name="Wei Y."/>
            <person name="Botstein D."/>
            <person name="Davis R.W."/>
        </authorList>
    </citation>
    <scope>NUCLEOTIDE SEQUENCE [LARGE SCALE GENOMIC DNA]</scope>
    <source>
        <strain>ATCC 204508 / S288c</strain>
    </source>
</reference>
<reference key="2">
    <citation type="journal article" date="2014" name="G3 (Bethesda)">
        <title>The reference genome sequence of Saccharomyces cerevisiae: Then and now.</title>
        <authorList>
            <person name="Engel S.R."/>
            <person name="Dietrich F.S."/>
            <person name="Fisk D.G."/>
            <person name="Binkley G."/>
            <person name="Balakrishnan R."/>
            <person name="Costanzo M.C."/>
            <person name="Dwight S.S."/>
            <person name="Hitz B.C."/>
            <person name="Karra K."/>
            <person name="Nash R.S."/>
            <person name="Weng S."/>
            <person name="Wong E.D."/>
            <person name="Lloyd P."/>
            <person name="Skrzypek M.S."/>
            <person name="Miyasato S.R."/>
            <person name="Simison M."/>
            <person name="Cherry J.M."/>
        </authorList>
    </citation>
    <scope>GENOME REANNOTATION</scope>
    <source>
        <strain>ATCC 204508 / S288c</strain>
    </source>
</reference>
<reference key="3">
    <citation type="journal article" date="2007" name="Genome Res.">
        <title>Approaching a complete repository of sequence-verified protein-encoding clones for Saccharomyces cerevisiae.</title>
        <authorList>
            <person name="Hu Y."/>
            <person name="Rolfs A."/>
            <person name="Bhullar B."/>
            <person name="Murthy T.V.S."/>
            <person name="Zhu C."/>
            <person name="Berger M.F."/>
            <person name="Camargo A.A."/>
            <person name="Kelley F."/>
            <person name="McCarron S."/>
            <person name="Jepson D."/>
            <person name="Richardson A."/>
            <person name="Raphael J."/>
            <person name="Moreira D."/>
            <person name="Taycher E."/>
            <person name="Zuo D."/>
            <person name="Mohr S."/>
            <person name="Kane M.F."/>
            <person name="Williamson J."/>
            <person name="Simpson A.J.G."/>
            <person name="Bulyk M.L."/>
            <person name="Harlow E."/>
            <person name="Marsischky G."/>
            <person name="Kolodner R.D."/>
            <person name="LaBaer J."/>
        </authorList>
    </citation>
    <scope>NUCLEOTIDE SEQUENCE [GENOMIC DNA]</scope>
    <source>
        <strain>ATCC 204508 / S288c</strain>
    </source>
</reference>
<name>YEB0_YEAST</name>
<accession>P40000</accession>
<comment type="caution">
    <text evidence="1">Product of a dubious gene prediction unlikely to encode a functional protein. Because of that it is not part of the S.cerevisiae S288c complete/reference proteome set.</text>
</comment>
<feature type="chain" id="PRO_0000202615" description="Putative uncharacterized protein YEL010W">
    <location>
        <begin position="1"/>
        <end position="116"/>
    </location>
</feature>
<proteinExistence type="uncertain"/>
<evidence type="ECO:0000305" key="1">
    <source>
    </source>
</evidence>
<dbReference type="EMBL" id="U18530">
    <property type="protein sequence ID" value="AAB64487.1"/>
    <property type="molecule type" value="Genomic_DNA"/>
</dbReference>
<dbReference type="EMBL" id="AY558340">
    <property type="protein sequence ID" value="AAS56666.1"/>
    <property type="molecule type" value="Genomic_DNA"/>
</dbReference>
<dbReference type="PIR" id="S50449">
    <property type="entry name" value="S50449"/>
</dbReference>
<dbReference type="PaxDb" id="4932-YEL010W"/>
<dbReference type="TopDownProteomics" id="P40000"/>
<dbReference type="EnsemblFungi" id="YEL010W_mRNA">
    <property type="protein sequence ID" value="YEL010W"/>
    <property type="gene ID" value="YEL010W"/>
</dbReference>
<dbReference type="AGR" id="SGD:S000000736"/>
<dbReference type="SGD" id="S000000736">
    <property type="gene designation" value="YEL010W"/>
</dbReference>
<dbReference type="HOGENOM" id="CLU_2098745_0_0_1"/>
<gene>
    <name type="ordered locus">YEL010W</name>
</gene>
<sequence>MGKYSSCRISNIFIVISKINEENSIYLVSLYYSFSTKCRAISMQEPGISSDSKFFSLFLIIRKVSVASDCRQLYECKKSNENIWEYFKRRLETRLSSFSIILSAVFPDVLFTFLFS</sequence>